<proteinExistence type="inferred from homology"/>
<gene>
    <name evidence="1" type="primary">greA</name>
    <name type="ordered locus">lpp2677</name>
</gene>
<sequence length="160" mass="17669">MSKHPMTVEGAEALKAELHRLKFVDRPRIVEAIATARAHGDLKENAEYHAAREQQSFNEGRIQELEAKLSHAQIIDISKLPNNGKVIFGSTVTICHVATGSELTYKIVGEDEADIKLNKISYSSPIARALIGKELDDAVTVETPGGMVEYEIIQVQYIVE</sequence>
<evidence type="ECO:0000255" key="1">
    <source>
        <dbReference type="HAMAP-Rule" id="MF_00105"/>
    </source>
</evidence>
<comment type="function">
    <text evidence="1">Necessary for efficient RNA polymerase transcription elongation past template-encoded arresting sites. The arresting sites in DNA have the property of trapping a certain fraction of elongating RNA polymerases that pass through, resulting in locked ternary complexes. Cleavage of the nascent transcript by cleavage factors such as GreA or GreB allows the resumption of elongation from the new 3'terminus. GreA releases sequences of 2 to 3 nucleotides.</text>
</comment>
<comment type="similarity">
    <text evidence="1">Belongs to the GreA/GreB family.</text>
</comment>
<reference key="1">
    <citation type="journal article" date="2004" name="Nat. Genet.">
        <title>Evidence in the Legionella pneumophila genome for exploitation of host cell functions and high genome plasticity.</title>
        <authorList>
            <person name="Cazalet C."/>
            <person name="Rusniok C."/>
            <person name="Brueggemann H."/>
            <person name="Zidane N."/>
            <person name="Magnier A."/>
            <person name="Ma L."/>
            <person name="Tichit M."/>
            <person name="Jarraud S."/>
            <person name="Bouchier C."/>
            <person name="Vandenesch F."/>
            <person name="Kunst F."/>
            <person name="Etienne J."/>
            <person name="Glaser P."/>
            <person name="Buchrieser C."/>
        </authorList>
    </citation>
    <scope>NUCLEOTIDE SEQUENCE [LARGE SCALE GENOMIC DNA]</scope>
    <source>
        <strain>Paris</strain>
    </source>
</reference>
<name>GREA_LEGPA</name>
<dbReference type="EMBL" id="CR628336">
    <property type="protein sequence ID" value="CAH13830.1"/>
    <property type="molecule type" value="Genomic_DNA"/>
</dbReference>
<dbReference type="RefSeq" id="WP_010948324.1">
    <property type="nucleotide sequence ID" value="NC_006368.1"/>
</dbReference>
<dbReference type="SMR" id="Q5X1R6"/>
<dbReference type="GeneID" id="57036623"/>
<dbReference type="KEGG" id="lpp:lpp2677"/>
<dbReference type="LegioList" id="lpp2677"/>
<dbReference type="HOGENOM" id="CLU_101379_2_0_6"/>
<dbReference type="GO" id="GO:0003677">
    <property type="term" value="F:DNA binding"/>
    <property type="evidence" value="ECO:0007669"/>
    <property type="project" value="UniProtKB-UniRule"/>
</dbReference>
<dbReference type="GO" id="GO:0070063">
    <property type="term" value="F:RNA polymerase binding"/>
    <property type="evidence" value="ECO:0007669"/>
    <property type="project" value="InterPro"/>
</dbReference>
<dbReference type="GO" id="GO:0006354">
    <property type="term" value="P:DNA-templated transcription elongation"/>
    <property type="evidence" value="ECO:0007669"/>
    <property type="project" value="TreeGrafter"/>
</dbReference>
<dbReference type="GO" id="GO:0032784">
    <property type="term" value="P:regulation of DNA-templated transcription elongation"/>
    <property type="evidence" value="ECO:0007669"/>
    <property type="project" value="UniProtKB-UniRule"/>
</dbReference>
<dbReference type="FunFam" id="1.10.287.180:FF:000001">
    <property type="entry name" value="Transcription elongation factor GreA"/>
    <property type="match status" value="1"/>
</dbReference>
<dbReference type="FunFam" id="3.10.50.30:FF:000001">
    <property type="entry name" value="Transcription elongation factor GreA"/>
    <property type="match status" value="1"/>
</dbReference>
<dbReference type="Gene3D" id="3.10.50.30">
    <property type="entry name" value="Transcription elongation factor, GreA/GreB, C-terminal domain"/>
    <property type="match status" value="1"/>
</dbReference>
<dbReference type="Gene3D" id="1.10.287.180">
    <property type="entry name" value="Transcription elongation factor, GreA/GreB, N-terminal domain"/>
    <property type="match status" value="1"/>
</dbReference>
<dbReference type="HAMAP" id="MF_00105">
    <property type="entry name" value="GreA_GreB"/>
    <property type="match status" value="1"/>
</dbReference>
<dbReference type="InterPro" id="IPR036953">
    <property type="entry name" value="GreA/GreB_C_sf"/>
</dbReference>
<dbReference type="InterPro" id="IPR018151">
    <property type="entry name" value="TF_GreA/GreB_CS"/>
</dbReference>
<dbReference type="InterPro" id="IPR006359">
    <property type="entry name" value="Tscrpt_elong_fac_GreA"/>
</dbReference>
<dbReference type="InterPro" id="IPR028624">
    <property type="entry name" value="Tscrpt_elong_fac_GreA/B"/>
</dbReference>
<dbReference type="InterPro" id="IPR001437">
    <property type="entry name" value="Tscrpt_elong_fac_GreA/B_C"/>
</dbReference>
<dbReference type="InterPro" id="IPR023459">
    <property type="entry name" value="Tscrpt_elong_fac_GreA/B_fam"/>
</dbReference>
<dbReference type="InterPro" id="IPR022691">
    <property type="entry name" value="Tscrpt_elong_fac_GreA/B_N"/>
</dbReference>
<dbReference type="InterPro" id="IPR036805">
    <property type="entry name" value="Tscrpt_elong_fac_GreA/B_N_sf"/>
</dbReference>
<dbReference type="NCBIfam" id="TIGR01462">
    <property type="entry name" value="greA"/>
    <property type="match status" value="1"/>
</dbReference>
<dbReference type="NCBIfam" id="NF001261">
    <property type="entry name" value="PRK00226.1-2"/>
    <property type="match status" value="1"/>
</dbReference>
<dbReference type="NCBIfam" id="NF001263">
    <property type="entry name" value="PRK00226.1-4"/>
    <property type="match status" value="1"/>
</dbReference>
<dbReference type="NCBIfam" id="NF001264">
    <property type="entry name" value="PRK00226.1-5"/>
    <property type="match status" value="1"/>
</dbReference>
<dbReference type="PANTHER" id="PTHR30437">
    <property type="entry name" value="TRANSCRIPTION ELONGATION FACTOR GREA"/>
    <property type="match status" value="1"/>
</dbReference>
<dbReference type="PANTHER" id="PTHR30437:SF4">
    <property type="entry name" value="TRANSCRIPTION ELONGATION FACTOR GREA"/>
    <property type="match status" value="1"/>
</dbReference>
<dbReference type="Pfam" id="PF01272">
    <property type="entry name" value="GreA_GreB"/>
    <property type="match status" value="1"/>
</dbReference>
<dbReference type="Pfam" id="PF03449">
    <property type="entry name" value="GreA_GreB_N"/>
    <property type="match status" value="1"/>
</dbReference>
<dbReference type="PIRSF" id="PIRSF006092">
    <property type="entry name" value="GreA_GreB"/>
    <property type="match status" value="1"/>
</dbReference>
<dbReference type="SUPFAM" id="SSF54534">
    <property type="entry name" value="FKBP-like"/>
    <property type="match status" value="1"/>
</dbReference>
<dbReference type="SUPFAM" id="SSF46557">
    <property type="entry name" value="GreA transcript cleavage protein, N-terminal domain"/>
    <property type="match status" value="1"/>
</dbReference>
<dbReference type="PROSITE" id="PS00829">
    <property type="entry name" value="GREAB_1"/>
    <property type="match status" value="1"/>
</dbReference>
<dbReference type="PROSITE" id="PS00830">
    <property type="entry name" value="GREAB_2"/>
    <property type="match status" value="1"/>
</dbReference>
<organism>
    <name type="scientific">Legionella pneumophila (strain Paris)</name>
    <dbReference type="NCBI Taxonomy" id="297246"/>
    <lineage>
        <taxon>Bacteria</taxon>
        <taxon>Pseudomonadati</taxon>
        <taxon>Pseudomonadota</taxon>
        <taxon>Gammaproteobacteria</taxon>
        <taxon>Legionellales</taxon>
        <taxon>Legionellaceae</taxon>
        <taxon>Legionella</taxon>
    </lineage>
</organism>
<protein>
    <recommendedName>
        <fullName evidence="1">Transcription elongation factor GreA</fullName>
    </recommendedName>
    <alternativeName>
        <fullName evidence="1">Transcript cleavage factor GreA</fullName>
    </alternativeName>
</protein>
<feature type="chain" id="PRO_1000034269" description="Transcription elongation factor GreA">
    <location>
        <begin position="1"/>
        <end position="160"/>
    </location>
</feature>
<feature type="coiled-coil region" evidence="1">
    <location>
        <begin position="50"/>
        <end position="70"/>
    </location>
</feature>
<keyword id="KW-0175">Coiled coil</keyword>
<keyword id="KW-0238">DNA-binding</keyword>
<keyword id="KW-0804">Transcription</keyword>
<keyword id="KW-0805">Transcription regulation</keyword>
<accession>Q5X1R6</accession>